<dbReference type="EC" id="2.8.1.13" evidence="1"/>
<dbReference type="EMBL" id="AE014299">
    <property type="protein sequence ID" value="AAN55661.1"/>
    <property type="molecule type" value="Genomic_DNA"/>
</dbReference>
<dbReference type="RefSeq" id="NP_718217.1">
    <property type="nucleotide sequence ID" value="NC_004347.2"/>
</dbReference>
<dbReference type="RefSeq" id="WP_011072580.1">
    <property type="nucleotide sequence ID" value="NC_004347.2"/>
</dbReference>
<dbReference type="SMR" id="Q8CX40"/>
<dbReference type="STRING" id="211586.SO_2633"/>
<dbReference type="PaxDb" id="211586-SO_2633"/>
<dbReference type="KEGG" id="son:SO_2633"/>
<dbReference type="PATRIC" id="fig|1028802.3.peg.429"/>
<dbReference type="eggNOG" id="COG0482">
    <property type="taxonomic scope" value="Bacteria"/>
</dbReference>
<dbReference type="HOGENOM" id="CLU_035188_1_0_6"/>
<dbReference type="OrthoDB" id="9800696at2"/>
<dbReference type="PhylomeDB" id="Q8CX40"/>
<dbReference type="BioCyc" id="SONE211586:G1GMP-2418-MONOMER"/>
<dbReference type="Proteomes" id="UP000008186">
    <property type="component" value="Chromosome"/>
</dbReference>
<dbReference type="GO" id="GO:0005737">
    <property type="term" value="C:cytoplasm"/>
    <property type="evidence" value="ECO:0007669"/>
    <property type="project" value="UniProtKB-SubCell"/>
</dbReference>
<dbReference type="GO" id="GO:0005524">
    <property type="term" value="F:ATP binding"/>
    <property type="evidence" value="ECO:0007669"/>
    <property type="project" value="UniProtKB-KW"/>
</dbReference>
<dbReference type="GO" id="GO:0000049">
    <property type="term" value="F:tRNA binding"/>
    <property type="evidence" value="ECO:0007669"/>
    <property type="project" value="UniProtKB-KW"/>
</dbReference>
<dbReference type="GO" id="GO:0103016">
    <property type="term" value="F:tRNA-uridine 2-sulfurtransferase activity"/>
    <property type="evidence" value="ECO:0007669"/>
    <property type="project" value="UniProtKB-EC"/>
</dbReference>
<dbReference type="GO" id="GO:0002143">
    <property type="term" value="P:tRNA wobble position uridine thiolation"/>
    <property type="evidence" value="ECO:0000318"/>
    <property type="project" value="GO_Central"/>
</dbReference>
<dbReference type="CDD" id="cd01998">
    <property type="entry name" value="MnmA_TRMU-like"/>
    <property type="match status" value="1"/>
</dbReference>
<dbReference type="FunFam" id="2.30.30.280:FF:000001">
    <property type="entry name" value="tRNA-specific 2-thiouridylase MnmA"/>
    <property type="match status" value="1"/>
</dbReference>
<dbReference type="FunFam" id="2.40.30.10:FF:000023">
    <property type="entry name" value="tRNA-specific 2-thiouridylase MnmA"/>
    <property type="match status" value="1"/>
</dbReference>
<dbReference type="FunFam" id="3.40.50.620:FF:000004">
    <property type="entry name" value="tRNA-specific 2-thiouridylase MnmA"/>
    <property type="match status" value="1"/>
</dbReference>
<dbReference type="Gene3D" id="2.30.30.280">
    <property type="entry name" value="Adenine nucleotide alpha hydrolases-like domains"/>
    <property type="match status" value="1"/>
</dbReference>
<dbReference type="Gene3D" id="3.40.50.620">
    <property type="entry name" value="HUPs"/>
    <property type="match status" value="1"/>
</dbReference>
<dbReference type="Gene3D" id="2.40.30.10">
    <property type="entry name" value="Translation factors"/>
    <property type="match status" value="1"/>
</dbReference>
<dbReference type="HAMAP" id="MF_00144">
    <property type="entry name" value="tRNA_thiouridyl_MnmA"/>
    <property type="match status" value="1"/>
</dbReference>
<dbReference type="InterPro" id="IPR004506">
    <property type="entry name" value="MnmA-like"/>
</dbReference>
<dbReference type="InterPro" id="IPR046885">
    <property type="entry name" value="MnmA-like_C"/>
</dbReference>
<dbReference type="InterPro" id="IPR046884">
    <property type="entry name" value="MnmA-like_central"/>
</dbReference>
<dbReference type="InterPro" id="IPR023382">
    <property type="entry name" value="MnmA-like_central_sf"/>
</dbReference>
<dbReference type="InterPro" id="IPR014729">
    <property type="entry name" value="Rossmann-like_a/b/a_fold"/>
</dbReference>
<dbReference type="NCBIfam" id="NF001138">
    <property type="entry name" value="PRK00143.1"/>
    <property type="match status" value="1"/>
</dbReference>
<dbReference type="NCBIfam" id="TIGR00420">
    <property type="entry name" value="trmU"/>
    <property type="match status" value="1"/>
</dbReference>
<dbReference type="PANTHER" id="PTHR11933:SF5">
    <property type="entry name" value="MITOCHONDRIAL TRNA-SPECIFIC 2-THIOURIDYLASE 1"/>
    <property type="match status" value="1"/>
</dbReference>
<dbReference type="PANTHER" id="PTHR11933">
    <property type="entry name" value="TRNA 5-METHYLAMINOMETHYL-2-THIOURIDYLATE -METHYLTRANSFERASE"/>
    <property type="match status" value="1"/>
</dbReference>
<dbReference type="Pfam" id="PF03054">
    <property type="entry name" value="tRNA_Me_trans"/>
    <property type="match status" value="1"/>
</dbReference>
<dbReference type="Pfam" id="PF20258">
    <property type="entry name" value="tRNA_Me_trans_C"/>
    <property type="match status" value="1"/>
</dbReference>
<dbReference type="Pfam" id="PF20259">
    <property type="entry name" value="tRNA_Me_trans_M"/>
    <property type="match status" value="1"/>
</dbReference>
<dbReference type="SUPFAM" id="SSF52402">
    <property type="entry name" value="Adenine nucleotide alpha hydrolases-like"/>
    <property type="match status" value="1"/>
</dbReference>
<sequence>MTSIEPTHTGKKVIVGMSGGVDSSVSAYLLMQQGYQVEGLFMKNWEEDDNDEYCAAAEDLKDAQAVCDKLGIKLHTVNFAAEYWDNVFEYFLAEYKAGRTPNPDIMCNKEIKFKAFLEFADDILDADYIAMGHYVRRRDNEDGTTQMLRGVDNNKDQSYFLYTLSHEQVARSLFPVGELEKHEVREIAKQMGLITHDKKDSTGICFIGERKFTEFLGNYLPAQPGNIETADGEVIGTHQGLMYHTLGQRKGLGIGGMKNSNDDPWYVVDKDLKRNVLVVGQGGHHPRLMSNGMLVNQLHWVDRKGPINGSQIVVKTRYRQQDIPCTLTYLDDNTLKVVFDEPVAAVTPGQSAVFYDGEVCLGGGIIDQLIRG</sequence>
<reference key="1">
    <citation type="journal article" date="2002" name="Nat. Biotechnol.">
        <title>Genome sequence of the dissimilatory metal ion-reducing bacterium Shewanella oneidensis.</title>
        <authorList>
            <person name="Heidelberg J.F."/>
            <person name="Paulsen I.T."/>
            <person name="Nelson K.E."/>
            <person name="Gaidos E.J."/>
            <person name="Nelson W.C."/>
            <person name="Read T.D."/>
            <person name="Eisen J.A."/>
            <person name="Seshadri R."/>
            <person name="Ward N.L."/>
            <person name="Methe B.A."/>
            <person name="Clayton R.A."/>
            <person name="Meyer T."/>
            <person name="Tsapin A."/>
            <person name="Scott J."/>
            <person name="Beanan M.J."/>
            <person name="Brinkac L.M."/>
            <person name="Daugherty S.C."/>
            <person name="DeBoy R.T."/>
            <person name="Dodson R.J."/>
            <person name="Durkin A.S."/>
            <person name="Haft D.H."/>
            <person name="Kolonay J.F."/>
            <person name="Madupu R."/>
            <person name="Peterson J.D."/>
            <person name="Umayam L.A."/>
            <person name="White O."/>
            <person name="Wolf A.M."/>
            <person name="Vamathevan J.J."/>
            <person name="Weidman J.F."/>
            <person name="Impraim M."/>
            <person name="Lee K."/>
            <person name="Berry K.J."/>
            <person name="Lee C."/>
            <person name="Mueller J."/>
            <person name="Khouri H.M."/>
            <person name="Gill J."/>
            <person name="Utterback T.R."/>
            <person name="McDonald L.A."/>
            <person name="Feldblyum T.V."/>
            <person name="Smith H.O."/>
            <person name="Venter J.C."/>
            <person name="Nealson K.H."/>
            <person name="Fraser C.M."/>
        </authorList>
    </citation>
    <scope>NUCLEOTIDE SEQUENCE [LARGE SCALE GENOMIC DNA]</scope>
    <source>
        <strain>ATCC 700550 / JCM 31522 / CIP 106686 / LMG 19005 / NCIMB 14063 / MR-1</strain>
    </source>
</reference>
<keyword id="KW-0067">ATP-binding</keyword>
<keyword id="KW-0963">Cytoplasm</keyword>
<keyword id="KW-1015">Disulfide bond</keyword>
<keyword id="KW-0547">Nucleotide-binding</keyword>
<keyword id="KW-1185">Reference proteome</keyword>
<keyword id="KW-0694">RNA-binding</keyword>
<keyword id="KW-0808">Transferase</keyword>
<keyword id="KW-0819">tRNA processing</keyword>
<keyword id="KW-0820">tRNA-binding</keyword>
<feature type="chain" id="PRO_0000121672" description="tRNA-specific 2-thiouridylase MnmA">
    <location>
        <begin position="1"/>
        <end position="372"/>
    </location>
</feature>
<feature type="region of interest" description="Interaction with target base in tRNA" evidence="1">
    <location>
        <begin position="102"/>
        <end position="104"/>
    </location>
</feature>
<feature type="region of interest" description="Interaction with tRNA" evidence="1">
    <location>
        <begin position="155"/>
        <end position="157"/>
    </location>
</feature>
<feature type="region of interest" description="Interaction with tRNA" evidence="1">
    <location>
        <begin position="317"/>
        <end position="318"/>
    </location>
</feature>
<feature type="active site" description="Nucleophile" evidence="1">
    <location>
        <position position="107"/>
    </location>
</feature>
<feature type="active site" description="Cysteine persulfide intermediate" evidence="1">
    <location>
        <position position="205"/>
    </location>
</feature>
<feature type="binding site" evidence="1">
    <location>
        <begin position="16"/>
        <end position="23"/>
    </location>
    <ligand>
        <name>ATP</name>
        <dbReference type="ChEBI" id="CHEBI:30616"/>
    </ligand>
</feature>
<feature type="binding site" evidence="1">
    <location>
        <position position="42"/>
    </location>
    <ligand>
        <name>ATP</name>
        <dbReference type="ChEBI" id="CHEBI:30616"/>
    </ligand>
</feature>
<feature type="binding site" evidence="1">
    <location>
        <position position="132"/>
    </location>
    <ligand>
        <name>ATP</name>
        <dbReference type="ChEBI" id="CHEBI:30616"/>
    </ligand>
</feature>
<feature type="site" description="Interaction with tRNA" evidence="1">
    <location>
        <position position="133"/>
    </location>
</feature>
<feature type="site" description="Interaction with tRNA" evidence="1">
    <location>
        <position position="350"/>
    </location>
</feature>
<feature type="disulfide bond" description="Alternate" evidence="1">
    <location>
        <begin position="107"/>
        <end position="205"/>
    </location>
</feature>
<comment type="function">
    <text evidence="1">Catalyzes the 2-thiolation of uridine at the wobble position (U34) of tRNA, leading to the formation of s(2)U34.</text>
</comment>
<comment type="catalytic activity">
    <reaction evidence="1">
        <text>S-sulfanyl-L-cysteinyl-[protein] + uridine(34) in tRNA + AH2 + ATP = 2-thiouridine(34) in tRNA + L-cysteinyl-[protein] + A + AMP + diphosphate + H(+)</text>
        <dbReference type="Rhea" id="RHEA:47032"/>
        <dbReference type="Rhea" id="RHEA-COMP:10131"/>
        <dbReference type="Rhea" id="RHEA-COMP:11726"/>
        <dbReference type="Rhea" id="RHEA-COMP:11727"/>
        <dbReference type="Rhea" id="RHEA-COMP:11728"/>
        <dbReference type="ChEBI" id="CHEBI:13193"/>
        <dbReference type="ChEBI" id="CHEBI:15378"/>
        <dbReference type="ChEBI" id="CHEBI:17499"/>
        <dbReference type="ChEBI" id="CHEBI:29950"/>
        <dbReference type="ChEBI" id="CHEBI:30616"/>
        <dbReference type="ChEBI" id="CHEBI:33019"/>
        <dbReference type="ChEBI" id="CHEBI:61963"/>
        <dbReference type="ChEBI" id="CHEBI:65315"/>
        <dbReference type="ChEBI" id="CHEBI:87170"/>
        <dbReference type="ChEBI" id="CHEBI:456215"/>
        <dbReference type="EC" id="2.8.1.13"/>
    </reaction>
</comment>
<comment type="subcellular location">
    <subcellularLocation>
        <location evidence="1">Cytoplasm</location>
    </subcellularLocation>
</comment>
<comment type="similarity">
    <text evidence="1">Belongs to the MnmA/TRMU family.</text>
</comment>
<evidence type="ECO:0000255" key="1">
    <source>
        <dbReference type="HAMAP-Rule" id="MF_00144"/>
    </source>
</evidence>
<organism>
    <name type="scientific">Shewanella oneidensis (strain ATCC 700550 / JCM 31522 / CIP 106686 / LMG 19005 / NCIMB 14063 / MR-1)</name>
    <dbReference type="NCBI Taxonomy" id="211586"/>
    <lineage>
        <taxon>Bacteria</taxon>
        <taxon>Pseudomonadati</taxon>
        <taxon>Pseudomonadota</taxon>
        <taxon>Gammaproteobacteria</taxon>
        <taxon>Alteromonadales</taxon>
        <taxon>Shewanellaceae</taxon>
        <taxon>Shewanella</taxon>
    </lineage>
</organism>
<name>MNMA_SHEON</name>
<gene>
    <name evidence="1" type="primary">mnmA</name>
    <name type="synonym">trmU</name>
    <name type="ordered locus">SO_2633</name>
</gene>
<protein>
    <recommendedName>
        <fullName evidence="1">tRNA-specific 2-thiouridylase MnmA</fullName>
        <ecNumber evidence="1">2.8.1.13</ecNumber>
    </recommendedName>
</protein>
<proteinExistence type="inferred from homology"/>
<accession>Q8CX40</accession>